<comment type="function">
    <text evidence="2">Catalyzes the reversible phosphorolytic breakdown of the N-glycosidic bond in the beta-(deoxy)ribonucleoside molecules, with the formation of the corresponding free purine bases and pentose-1-phosphate.</text>
</comment>
<comment type="catalytic activity">
    <reaction evidence="2">
        <text>a purine D-ribonucleoside + phosphate = a purine nucleobase + alpha-D-ribose 1-phosphate</text>
        <dbReference type="Rhea" id="RHEA:19805"/>
        <dbReference type="ChEBI" id="CHEBI:26386"/>
        <dbReference type="ChEBI" id="CHEBI:43474"/>
        <dbReference type="ChEBI" id="CHEBI:57720"/>
        <dbReference type="ChEBI" id="CHEBI:142355"/>
        <dbReference type="EC" id="2.4.2.1"/>
    </reaction>
</comment>
<comment type="catalytic activity">
    <reaction evidence="2">
        <text>a purine 2'-deoxy-D-ribonucleoside + phosphate = a purine nucleobase + 2-deoxy-alpha-D-ribose 1-phosphate</text>
        <dbReference type="Rhea" id="RHEA:36431"/>
        <dbReference type="ChEBI" id="CHEBI:26386"/>
        <dbReference type="ChEBI" id="CHEBI:43474"/>
        <dbReference type="ChEBI" id="CHEBI:57259"/>
        <dbReference type="ChEBI" id="CHEBI:142361"/>
        <dbReference type="EC" id="2.4.2.1"/>
    </reaction>
</comment>
<comment type="subunit">
    <text evidence="2">Homohexamer; trimer of homodimers.</text>
</comment>
<comment type="similarity">
    <text evidence="2">Belongs to the PNP/UDP phosphorylase family.</text>
</comment>
<dbReference type="EC" id="2.4.2.1" evidence="2"/>
<dbReference type="EMBL" id="CP001638">
    <property type="protein sequence ID" value="ACS24601.1"/>
    <property type="molecule type" value="Genomic_DNA"/>
</dbReference>
<dbReference type="SMR" id="C5D2F9"/>
<dbReference type="STRING" id="471223.GWCH70_1863"/>
<dbReference type="KEGG" id="gwc:GWCH70_1863"/>
<dbReference type="eggNOG" id="COG0813">
    <property type="taxonomic scope" value="Bacteria"/>
</dbReference>
<dbReference type="HOGENOM" id="CLU_068457_2_0_9"/>
<dbReference type="OrthoDB" id="9782889at2"/>
<dbReference type="GO" id="GO:0005829">
    <property type="term" value="C:cytosol"/>
    <property type="evidence" value="ECO:0007669"/>
    <property type="project" value="TreeGrafter"/>
</dbReference>
<dbReference type="GO" id="GO:0004731">
    <property type="term" value="F:purine-nucleoside phosphorylase activity"/>
    <property type="evidence" value="ECO:0007669"/>
    <property type="project" value="UniProtKB-UniRule"/>
</dbReference>
<dbReference type="GO" id="GO:0006152">
    <property type="term" value="P:purine nucleoside catabolic process"/>
    <property type="evidence" value="ECO:0007669"/>
    <property type="project" value="TreeGrafter"/>
</dbReference>
<dbReference type="CDD" id="cd09006">
    <property type="entry name" value="PNP_EcPNPI-like"/>
    <property type="match status" value="1"/>
</dbReference>
<dbReference type="Gene3D" id="3.40.50.1580">
    <property type="entry name" value="Nucleoside phosphorylase domain"/>
    <property type="match status" value="1"/>
</dbReference>
<dbReference type="HAMAP" id="MF_01627">
    <property type="entry name" value="Pur_nucleosid_phosp"/>
    <property type="match status" value="1"/>
</dbReference>
<dbReference type="InterPro" id="IPR004402">
    <property type="entry name" value="DeoD-type"/>
</dbReference>
<dbReference type="InterPro" id="IPR018016">
    <property type="entry name" value="Nucleoside_phosphorylase_CS"/>
</dbReference>
<dbReference type="InterPro" id="IPR000845">
    <property type="entry name" value="Nucleoside_phosphorylase_d"/>
</dbReference>
<dbReference type="InterPro" id="IPR035994">
    <property type="entry name" value="Nucleoside_phosphorylase_sf"/>
</dbReference>
<dbReference type="NCBIfam" id="TIGR00107">
    <property type="entry name" value="deoD"/>
    <property type="match status" value="1"/>
</dbReference>
<dbReference type="NCBIfam" id="NF004489">
    <property type="entry name" value="PRK05819.1"/>
    <property type="match status" value="1"/>
</dbReference>
<dbReference type="PANTHER" id="PTHR43691:SF11">
    <property type="entry name" value="FI09636P-RELATED"/>
    <property type="match status" value="1"/>
</dbReference>
<dbReference type="PANTHER" id="PTHR43691">
    <property type="entry name" value="URIDINE PHOSPHORYLASE"/>
    <property type="match status" value="1"/>
</dbReference>
<dbReference type="Pfam" id="PF01048">
    <property type="entry name" value="PNP_UDP_1"/>
    <property type="match status" value="1"/>
</dbReference>
<dbReference type="SUPFAM" id="SSF53167">
    <property type="entry name" value="Purine and uridine phosphorylases"/>
    <property type="match status" value="1"/>
</dbReference>
<dbReference type="PROSITE" id="PS01232">
    <property type="entry name" value="PNP_UDP_1"/>
    <property type="match status" value="1"/>
</dbReference>
<name>DEOD_GEOSW</name>
<proteinExistence type="inferred from homology"/>
<keyword id="KW-0328">Glycosyltransferase</keyword>
<keyword id="KW-0808">Transferase</keyword>
<accession>C5D2F9</accession>
<sequence length="235" mass="25929">MSIHIEAKQGEIADKILLPGDPLRAQYIAETFLEGATCYNRVRGMLGFTGTYKGHRISVQGTGMGVPSISIYVNELIQSYGVQTLIRVGTCGAIQKDVNVRDVILAMSASTDSNMNRLTFRGRDYAPTAHFDLLRTAYEVGVEKGLKLKVGNVFTADMFYNDQPDWETWARYGVLAVEMETAALYTLAAKFGRKALSVLTVSDHILTGEETTAQERQTTFNEMIEVALETAIRVG</sequence>
<gene>
    <name evidence="2" type="primary">deoD</name>
    <name type="ordered locus">GWCH70_1863</name>
</gene>
<evidence type="ECO:0000250" key="1">
    <source>
        <dbReference type="UniProtKB" id="P50389"/>
    </source>
</evidence>
<evidence type="ECO:0000255" key="2">
    <source>
        <dbReference type="HAMAP-Rule" id="MF_01627"/>
    </source>
</evidence>
<reference key="1">
    <citation type="submission" date="2009-06" db="EMBL/GenBank/DDBJ databases">
        <title>Complete sequence of chromosome of Geopacillus sp. WCH70.</title>
        <authorList>
            <consortium name="US DOE Joint Genome Institute"/>
            <person name="Lucas S."/>
            <person name="Copeland A."/>
            <person name="Lapidus A."/>
            <person name="Glavina del Rio T."/>
            <person name="Dalin E."/>
            <person name="Tice H."/>
            <person name="Bruce D."/>
            <person name="Goodwin L."/>
            <person name="Pitluck S."/>
            <person name="Chertkov O."/>
            <person name="Brettin T."/>
            <person name="Detter J.C."/>
            <person name="Han C."/>
            <person name="Larimer F."/>
            <person name="Land M."/>
            <person name="Hauser L."/>
            <person name="Kyrpides N."/>
            <person name="Mikhailova N."/>
            <person name="Brumm P."/>
            <person name="Mead D.A."/>
            <person name="Richardson P."/>
        </authorList>
    </citation>
    <scope>NUCLEOTIDE SEQUENCE [LARGE SCALE GENOMIC DNA]</scope>
    <source>
        <strain>WCH70</strain>
    </source>
</reference>
<protein>
    <recommendedName>
        <fullName evidence="2">Purine nucleoside phosphorylase DeoD-type</fullName>
        <shortName evidence="2">PNP</shortName>
        <ecNumber evidence="2">2.4.2.1</ecNumber>
    </recommendedName>
</protein>
<organism>
    <name type="scientific">Geobacillus sp. (strain WCH70)</name>
    <dbReference type="NCBI Taxonomy" id="471223"/>
    <lineage>
        <taxon>Bacteria</taxon>
        <taxon>Bacillati</taxon>
        <taxon>Bacillota</taxon>
        <taxon>Bacilli</taxon>
        <taxon>Bacillales</taxon>
        <taxon>Anoxybacillaceae</taxon>
        <taxon>Geobacillus</taxon>
    </lineage>
</organism>
<feature type="chain" id="PRO_1000215751" description="Purine nucleoside phosphorylase DeoD-type">
    <location>
        <begin position="1"/>
        <end position="235"/>
    </location>
</feature>
<feature type="active site" description="Proton donor" evidence="2">
    <location>
        <position position="203"/>
    </location>
</feature>
<feature type="binding site" evidence="1">
    <location>
        <position position="4"/>
    </location>
    <ligand>
        <name>a purine D-ribonucleoside</name>
        <dbReference type="ChEBI" id="CHEBI:142355"/>
        <note>ligand shared between dimeric partners</note>
    </ligand>
</feature>
<feature type="binding site" description="in other chain" evidence="1">
    <location>
        <position position="20"/>
    </location>
    <ligand>
        <name>phosphate</name>
        <dbReference type="ChEBI" id="CHEBI:43474"/>
        <note>ligand shared between dimeric partners</note>
    </ligand>
</feature>
<feature type="binding site" description="in other chain" evidence="1">
    <location>
        <position position="24"/>
    </location>
    <ligand>
        <name>phosphate</name>
        <dbReference type="ChEBI" id="CHEBI:43474"/>
        <note>ligand shared between dimeric partners</note>
    </ligand>
</feature>
<feature type="binding site" evidence="1">
    <location>
        <position position="43"/>
    </location>
    <ligand>
        <name>phosphate</name>
        <dbReference type="ChEBI" id="CHEBI:43474"/>
        <note>ligand shared between dimeric partners</note>
    </ligand>
</feature>
<feature type="binding site" description="in other chain" evidence="1">
    <location>
        <begin position="87"/>
        <end position="90"/>
    </location>
    <ligand>
        <name>phosphate</name>
        <dbReference type="ChEBI" id="CHEBI:43474"/>
        <note>ligand shared between dimeric partners</note>
    </ligand>
</feature>
<feature type="binding site" description="in other chain" evidence="1">
    <location>
        <begin position="178"/>
        <end position="180"/>
    </location>
    <ligand>
        <name>a purine D-ribonucleoside</name>
        <dbReference type="ChEBI" id="CHEBI:142355"/>
        <note>ligand shared between dimeric partners</note>
    </ligand>
</feature>
<feature type="binding site" description="in other chain" evidence="1">
    <location>
        <begin position="202"/>
        <end position="203"/>
    </location>
    <ligand>
        <name>a purine D-ribonucleoside</name>
        <dbReference type="ChEBI" id="CHEBI:142355"/>
        <note>ligand shared between dimeric partners</note>
    </ligand>
</feature>
<feature type="site" description="Important for catalytic activity" evidence="2">
    <location>
        <position position="216"/>
    </location>
</feature>